<evidence type="ECO:0000250" key="1">
    <source>
        <dbReference type="UniProtKB" id="O95835"/>
    </source>
</evidence>
<evidence type="ECO:0000250" key="2">
    <source>
        <dbReference type="UniProtKB" id="Q91VJ4"/>
    </source>
</evidence>
<evidence type="ECO:0000255" key="3">
    <source>
        <dbReference type="PROSITE-ProRule" id="PRU00159"/>
    </source>
</evidence>
<evidence type="ECO:0000255" key="4">
    <source>
        <dbReference type="PROSITE-ProRule" id="PRU00618"/>
    </source>
</evidence>
<evidence type="ECO:0000255" key="5">
    <source>
        <dbReference type="PROSITE-ProRule" id="PRU10027"/>
    </source>
</evidence>
<evidence type="ECO:0000269" key="6">
    <source>
    </source>
</evidence>
<evidence type="ECO:0000269" key="7">
    <source>
    </source>
</evidence>
<evidence type="ECO:0000269" key="8">
    <source>
    </source>
</evidence>
<evidence type="ECO:0000269" key="9">
    <source>
    </source>
</evidence>
<evidence type="ECO:0000269" key="10">
    <source>
    </source>
</evidence>
<evidence type="ECO:0000269" key="11">
    <source>
    </source>
</evidence>
<evidence type="ECO:0000269" key="12">
    <source>
    </source>
</evidence>
<evidence type="ECO:0000269" key="13">
    <source>
    </source>
</evidence>
<evidence type="ECO:0000269" key="14">
    <source>
    </source>
</evidence>
<evidence type="ECO:0000269" key="15">
    <source>
    </source>
</evidence>
<evidence type="ECO:0000269" key="16">
    <source>
    </source>
</evidence>
<evidence type="ECO:0000269" key="17">
    <source ref="4"/>
</evidence>
<evidence type="ECO:0000303" key="18">
    <source>
    </source>
</evidence>
<evidence type="ECO:0000303" key="19">
    <source>
    </source>
</evidence>
<evidence type="ECO:0000305" key="20"/>
<evidence type="ECO:0000305" key="21">
    <source>
    </source>
</evidence>
<evidence type="ECO:0000312" key="22">
    <source>
        <dbReference type="EMBL" id="AAH12085.1"/>
    </source>
</evidence>
<evidence type="ECO:0000312" key="23">
    <source>
        <dbReference type="EMBL" id="CAA84485.1"/>
    </source>
</evidence>
<evidence type="ECO:0000312" key="24">
    <source>
        <dbReference type="HGNC" id="HGNC:17847"/>
    </source>
</evidence>
<evidence type="ECO:0007744" key="25">
    <source>
    </source>
</evidence>
<evidence type="ECO:0007744" key="26">
    <source>
    </source>
</evidence>
<evidence type="ECO:0007829" key="27">
    <source>
        <dbReference type="PDB" id="1PSB"/>
    </source>
</evidence>
<evidence type="ECO:0007829" key="28">
    <source>
        <dbReference type="PDB" id="6BXI"/>
    </source>
</evidence>
<dbReference type="EC" id="2.7.11.1" evidence="6"/>
<dbReference type="EMBL" id="Z35102">
    <property type="protein sequence ID" value="CAA84485.1"/>
    <property type="molecule type" value="mRNA"/>
</dbReference>
<dbReference type="EMBL" id="Z85986">
    <property type="status" value="NOT_ANNOTATED_CDS"/>
    <property type="molecule type" value="Genomic_DNA"/>
</dbReference>
<dbReference type="EMBL" id="BC012085">
    <property type="protein sequence ID" value="AAH12085.1"/>
    <property type="molecule type" value="mRNA"/>
</dbReference>
<dbReference type="EMBL" id="BC095413">
    <property type="protein sequence ID" value="AAH95413.1"/>
    <property type="molecule type" value="mRNA"/>
</dbReference>
<dbReference type="CCDS" id="CCDS4822.1"/>
<dbReference type="PIR" id="I38133">
    <property type="entry name" value="I38133"/>
</dbReference>
<dbReference type="RefSeq" id="NP_001292031.1">
    <property type="nucleotide sequence ID" value="NM_001305102.2"/>
</dbReference>
<dbReference type="RefSeq" id="NP_009202.1">
    <property type="nucleotide sequence ID" value="NM_007271.4"/>
</dbReference>
<dbReference type="RefSeq" id="XP_006715051.1">
    <property type="nucleotide sequence ID" value="XM_006714988.3"/>
</dbReference>
<dbReference type="RefSeq" id="XP_006715052.1">
    <property type="nucleotide sequence ID" value="XM_006714989.3"/>
</dbReference>
<dbReference type="RefSeq" id="XP_047274095.1">
    <property type="nucleotide sequence ID" value="XM_047418139.1"/>
</dbReference>
<dbReference type="RefSeq" id="XP_047274096.1">
    <property type="nucleotide sequence ID" value="XM_047418140.1"/>
</dbReference>
<dbReference type="RefSeq" id="XP_047274097.1">
    <property type="nucleotide sequence ID" value="XM_047418141.1"/>
</dbReference>
<dbReference type="RefSeq" id="XP_054210120.1">
    <property type="nucleotide sequence ID" value="XM_054354145.1"/>
</dbReference>
<dbReference type="RefSeq" id="XP_054210121.1">
    <property type="nucleotide sequence ID" value="XM_054354146.1"/>
</dbReference>
<dbReference type="RefSeq" id="XP_054210122.1">
    <property type="nucleotide sequence ID" value="XM_054354147.1"/>
</dbReference>
<dbReference type="PDB" id="1PSB">
    <property type="method" value="NMR"/>
    <property type="chains" value="C/D=62-87"/>
</dbReference>
<dbReference type="PDB" id="6BXI">
    <property type="method" value="X-ray"/>
    <property type="resolution" value="2.20 A"/>
    <property type="chains" value="A/B=82-414"/>
</dbReference>
<dbReference type="PDBsum" id="1PSB"/>
<dbReference type="PDBsum" id="6BXI"/>
<dbReference type="BMRB" id="Q15208"/>
<dbReference type="SMR" id="Q15208"/>
<dbReference type="BioGRID" id="116457">
    <property type="interactions" value="184"/>
</dbReference>
<dbReference type="CORUM" id="Q15208"/>
<dbReference type="FunCoup" id="Q15208">
    <property type="interactions" value="4430"/>
</dbReference>
<dbReference type="IntAct" id="Q15208">
    <property type="interactions" value="70"/>
</dbReference>
<dbReference type="MINT" id="Q15208"/>
<dbReference type="STRING" id="9606.ENSP00000229812"/>
<dbReference type="BindingDB" id="Q15208"/>
<dbReference type="ChEMBL" id="CHEMBL1075155"/>
<dbReference type="DrugBank" id="DB12010">
    <property type="generic name" value="Fostamatinib"/>
</dbReference>
<dbReference type="DrugCentral" id="Q15208"/>
<dbReference type="iPTMnet" id="Q15208"/>
<dbReference type="MetOSite" id="Q15208"/>
<dbReference type="PhosphoSitePlus" id="Q15208"/>
<dbReference type="BioMuta" id="STK38"/>
<dbReference type="DMDM" id="56749457"/>
<dbReference type="CPTAC" id="CPTAC-2988"/>
<dbReference type="CPTAC" id="CPTAC-2989"/>
<dbReference type="jPOST" id="Q15208"/>
<dbReference type="MassIVE" id="Q15208"/>
<dbReference type="PaxDb" id="9606-ENSP00000229812"/>
<dbReference type="PeptideAtlas" id="Q15208"/>
<dbReference type="ProteomicsDB" id="60489"/>
<dbReference type="Pumba" id="Q15208"/>
<dbReference type="Antibodypedia" id="29688">
    <property type="antibodies" value="445 antibodies from 32 providers"/>
</dbReference>
<dbReference type="DNASU" id="11329"/>
<dbReference type="Ensembl" id="ENST00000229812.8">
    <property type="protein sequence ID" value="ENSP00000229812.7"/>
    <property type="gene ID" value="ENSG00000112079.9"/>
</dbReference>
<dbReference type="GeneID" id="11329"/>
<dbReference type="KEGG" id="hsa:11329"/>
<dbReference type="MANE-Select" id="ENST00000229812.8">
    <property type="protein sequence ID" value="ENSP00000229812.7"/>
    <property type="RefSeq nucleotide sequence ID" value="NM_007271.4"/>
    <property type="RefSeq protein sequence ID" value="NP_009202.1"/>
</dbReference>
<dbReference type="UCSC" id="uc003omh.3">
    <property type="organism name" value="human"/>
</dbReference>
<dbReference type="AGR" id="HGNC:17847"/>
<dbReference type="CTD" id="11329"/>
<dbReference type="DisGeNET" id="11329"/>
<dbReference type="GeneCards" id="STK38"/>
<dbReference type="HGNC" id="HGNC:17847">
    <property type="gene designation" value="STK38"/>
</dbReference>
<dbReference type="HPA" id="ENSG00000112079">
    <property type="expression patterns" value="Low tissue specificity"/>
</dbReference>
<dbReference type="MIM" id="606964">
    <property type="type" value="gene"/>
</dbReference>
<dbReference type="neXtProt" id="NX_Q15208"/>
<dbReference type="OpenTargets" id="ENSG00000112079"/>
<dbReference type="PharmGKB" id="PA38251"/>
<dbReference type="VEuPathDB" id="HostDB:ENSG00000112079"/>
<dbReference type="eggNOG" id="KOG0605">
    <property type="taxonomic scope" value="Eukaryota"/>
</dbReference>
<dbReference type="GeneTree" id="ENSGT00940000153544"/>
<dbReference type="HOGENOM" id="CLU_000288_67_0_1"/>
<dbReference type="InParanoid" id="Q15208"/>
<dbReference type="OMA" id="MLVHHAL"/>
<dbReference type="OrthoDB" id="3638488at2759"/>
<dbReference type="PAN-GO" id="Q15208">
    <property type="GO annotations" value="3 GO annotations based on evolutionary models"/>
</dbReference>
<dbReference type="PhylomeDB" id="Q15208"/>
<dbReference type="TreeFam" id="TF105337"/>
<dbReference type="BRENDA" id="2.7.11.1">
    <property type="organism ID" value="2681"/>
</dbReference>
<dbReference type="PathwayCommons" id="Q15208"/>
<dbReference type="Reactome" id="R-HSA-9013418">
    <property type="pathway name" value="RHOBTB2 GTPase cycle"/>
</dbReference>
<dbReference type="Reactome" id="R-HSA-9013422">
    <property type="pathway name" value="RHOBTB1 GTPase cycle"/>
</dbReference>
<dbReference type="SignaLink" id="Q15208"/>
<dbReference type="SIGNOR" id="Q15208"/>
<dbReference type="BioGRID-ORCS" id="11329">
    <property type="hits" value="16 hits in 1115 CRISPR screens"/>
</dbReference>
<dbReference type="CD-CODE" id="8C2F96ED">
    <property type="entry name" value="Centrosome"/>
</dbReference>
<dbReference type="ChiTaRS" id="STK38">
    <property type="organism name" value="human"/>
</dbReference>
<dbReference type="EvolutionaryTrace" id="Q15208"/>
<dbReference type="GeneWiki" id="STK38"/>
<dbReference type="GenomeRNAi" id="11329"/>
<dbReference type="Pharos" id="Q15208">
    <property type="development level" value="Tchem"/>
</dbReference>
<dbReference type="PRO" id="PR:Q15208"/>
<dbReference type="Proteomes" id="UP000005640">
    <property type="component" value="Chromosome 6"/>
</dbReference>
<dbReference type="RNAct" id="Q15208">
    <property type="molecule type" value="protein"/>
</dbReference>
<dbReference type="Bgee" id="ENSG00000112079">
    <property type="expression patterns" value="Expressed in palpebral conjunctiva and 208 other cell types or tissues"/>
</dbReference>
<dbReference type="ExpressionAtlas" id="Q15208">
    <property type="expression patterns" value="baseline and differential"/>
</dbReference>
<dbReference type="GO" id="GO:0005737">
    <property type="term" value="C:cytoplasm"/>
    <property type="evidence" value="ECO:0000314"/>
    <property type="project" value="UniProtKB"/>
</dbReference>
<dbReference type="GO" id="GO:0005829">
    <property type="term" value="C:cytosol"/>
    <property type="evidence" value="ECO:0000314"/>
    <property type="project" value="HPA"/>
</dbReference>
<dbReference type="GO" id="GO:0098978">
    <property type="term" value="C:glutamatergic synapse"/>
    <property type="evidence" value="ECO:0007669"/>
    <property type="project" value="Ensembl"/>
</dbReference>
<dbReference type="GO" id="GO:0005634">
    <property type="term" value="C:nucleus"/>
    <property type="evidence" value="ECO:0000314"/>
    <property type="project" value="UniProtKB"/>
</dbReference>
<dbReference type="GO" id="GO:0035861">
    <property type="term" value="C:site of double-strand break"/>
    <property type="evidence" value="ECO:0000314"/>
    <property type="project" value="UniProtKB"/>
</dbReference>
<dbReference type="GO" id="GO:0005524">
    <property type="term" value="F:ATP binding"/>
    <property type="evidence" value="ECO:0000314"/>
    <property type="project" value="UniProtKB"/>
</dbReference>
<dbReference type="GO" id="GO:0045296">
    <property type="term" value="F:cadherin binding"/>
    <property type="evidence" value="ECO:0007005"/>
    <property type="project" value="BHF-UCL"/>
</dbReference>
<dbReference type="GO" id="GO:0140566">
    <property type="term" value="F:histone reader activity"/>
    <property type="evidence" value="ECO:0000314"/>
    <property type="project" value="UniProtKB"/>
</dbReference>
<dbReference type="GO" id="GO:0000287">
    <property type="term" value="F:magnesium ion binding"/>
    <property type="evidence" value="ECO:0000314"/>
    <property type="project" value="UniProtKB"/>
</dbReference>
<dbReference type="GO" id="GO:0031435">
    <property type="term" value="F:mitogen-activated protein kinase kinase kinase binding"/>
    <property type="evidence" value="ECO:0000353"/>
    <property type="project" value="UniProtKB"/>
</dbReference>
<dbReference type="GO" id="GO:0106310">
    <property type="term" value="F:protein serine kinase activity"/>
    <property type="evidence" value="ECO:0007669"/>
    <property type="project" value="RHEA"/>
</dbReference>
<dbReference type="GO" id="GO:0004674">
    <property type="term" value="F:protein serine/threonine kinase activity"/>
    <property type="evidence" value="ECO:0000314"/>
    <property type="project" value="UniProtKB"/>
</dbReference>
<dbReference type="GO" id="GO:0140035">
    <property type="term" value="F:ubiquitin-like protein reader activity"/>
    <property type="evidence" value="ECO:0000314"/>
    <property type="project" value="UniProt"/>
</dbReference>
<dbReference type="GO" id="GO:0141185">
    <property type="term" value="F:UFM1-modified protein reader activity"/>
    <property type="evidence" value="ECO:0000314"/>
    <property type="project" value="UniProtKB"/>
</dbReference>
<dbReference type="GO" id="GO:0000077">
    <property type="term" value="P:DNA damage checkpoint signaling"/>
    <property type="evidence" value="ECO:0000314"/>
    <property type="project" value="UniProtKB"/>
</dbReference>
<dbReference type="GO" id="GO:0006974">
    <property type="term" value="P:DNA damage response"/>
    <property type="evidence" value="ECO:0000314"/>
    <property type="project" value="UniProtKB"/>
</dbReference>
<dbReference type="GO" id="GO:0035556">
    <property type="term" value="P:intracellular signal transduction"/>
    <property type="evidence" value="ECO:0000314"/>
    <property type="project" value="UniProtKB"/>
</dbReference>
<dbReference type="GO" id="GO:0043407">
    <property type="term" value="P:negative regulation of MAP kinase activity"/>
    <property type="evidence" value="ECO:0000314"/>
    <property type="project" value="UniProtKB"/>
</dbReference>
<dbReference type="GO" id="GO:0099173">
    <property type="term" value="P:postsynapse organization"/>
    <property type="evidence" value="ECO:0007669"/>
    <property type="project" value="Ensembl"/>
</dbReference>
<dbReference type="GO" id="GO:0036211">
    <property type="term" value="P:protein modification process"/>
    <property type="evidence" value="ECO:0000314"/>
    <property type="project" value="ProtInc"/>
</dbReference>
<dbReference type="GO" id="GO:0006468">
    <property type="term" value="P:protein phosphorylation"/>
    <property type="evidence" value="ECO:0000314"/>
    <property type="project" value="UniProtKB"/>
</dbReference>
<dbReference type="CDD" id="cd21782">
    <property type="entry name" value="MobB_NDR1"/>
    <property type="match status" value="1"/>
</dbReference>
<dbReference type="CDD" id="cd05628">
    <property type="entry name" value="STKc_NDR1"/>
    <property type="match status" value="1"/>
</dbReference>
<dbReference type="FunFam" id="1.10.510.10:FF:000057">
    <property type="entry name" value="Non-specific serine/threonine protein kinase"/>
    <property type="match status" value="1"/>
</dbReference>
<dbReference type="FunFam" id="1.10.510.10:FF:000086">
    <property type="entry name" value="Non-specific serine/threonine protein kinase"/>
    <property type="match status" value="1"/>
</dbReference>
<dbReference type="FunFam" id="3.30.200.20:FF:000118">
    <property type="entry name" value="Non-specific serine/threonine protein kinase"/>
    <property type="match status" value="1"/>
</dbReference>
<dbReference type="Gene3D" id="3.30.200.20">
    <property type="entry name" value="Phosphorylase Kinase, domain 1"/>
    <property type="match status" value="1"/>
</dbReference>
<dbReference type="Gene3D" id="1.10.510.10">
    <property type="entry name" value="Transferase(Phosphotransferase) domain 1"/>
    <property type="match status" value="2"/>
</dbReference>
<dbReference type="IDEAL" id="IID00172"/>
<dbReference type="InterPro" id="IPR000961">
    <property type="entry name" value="AGC-kinase_C"/>
</dbReference>
<dbReference type="InterPro" id="IPR011009">
    <property type="entry name" value="Kinase-like_dom_sf"/>
</dbReference>
<dbReference type="InterPro" id="IPR017892">
    <property type="entry name" value="Pkinase_C"/>
</dbReference>
<dbReference type="InterPro" id="IPR000719">
    <property type="entry name" value="Prot_kinase_dom"/>
</dbReference>
<dbReference type="InterPro" id="IPR017441">
    <property type="entry name" value="Protein_kinase_ATP_BS"/>
</dbReference>
<dbReference type="InterPro" id="IPR050839">
    <property type="entry name" value="Rho-assoc_Ser/Thr_Kinase"/>
</dbReference>
<dbReference type="InterPro" id="IPR008271">
    <property type="entry name" value="Ser/Thr_kinase_AS"/>
</dbReference>
<dbReference type="PANTHER" id="PTHR22988:SF76">
    <property type="entry name" value="CHROMOSOME UNDETERMINED SCAFFOLD_135, WHOLE GENOME SHOTGUN SEQUENCE"/>
    <property type="match status" value="1"/>
</dbReference>
<dbReference type="PANTHER" id="PTHR22988">
    <property type="entry name" value="MYOTONIC DYSTROPHY S/T KINASE-RELATED"/>
    <property type="match status" value="1"/>
</dbReference>
<dbReference type="Pfam" id="PF00069">
    <property type="entry name" value="Pkinase"/>
    <property type="match status" value="1"/>
</dbReference>
<dbReference type="Pfam" id="PF00433">
    <property type="entry name" value="Pkinase_C"/>
    <property type="match status" value="1"/>
</dbReference>
<dbReference type="SMART" id="SM00133">
    <property type="entry name" value="S_TK_X"/>
    <property type="match status" value="1"/>
</dbReference>
<dbReference type="SMART" id="SM00220">
    <property type="entry name" value="S_TKc"/>
    <property type="match status" value="1"/>
</dbReference>
<dbReference type="SUPFAM" id="SSF56112">
    <property type="entry name" value="Protein kinase-like (PK-like)"/>
    <property type="match status" value="1"/>
</dbReference>
<dbReference type="PROSITE" id="PS51285">
    <property type="entry name" value="AGC_KINASE_CTER"/>
    <property type="match status" value="1"/>
</dbReference>
<dbReference type="PROSITE" id="PS00107">
    <property type="entry name" value="PROTEIN_KINASE_ATP"/>
    <property type="match status" value="1"/>
</dbReference>
<dbReference type="PROSITE" id="PS50011">
    <property type="entry name" value="PROTEIN_KINASE_DOM"/>
    <property type="match status" value="1"/>
</dbReference>
<dbReference type="PROSITE" id="PS00108">
    <property type="entry name" value="PROTEIN_KINASE_ST"/>
    <property type="match status" value="1"/>
</dbReference>
<sequence length="465" mass="54190">MAMTGSTPCSSMSNHTKERVTMTKVTLENFYSNLIAQHEEREMRQKKLEKVMEEEGLKDEEKRLRRSAHARKETEFLRLKRTRLGLEDFESLKVIGRGAFGEVRLVQKKDTGHVYAMKILRKADMLEKEQVGHIRAERDILVEADSLWVVKMFYSFQDKLNLYLIMEFLPGGDMMTLLMKKDTLTEEETQFYIAETVLAIDSIHQLGFIHRDIKPDNLLLDSKGHVKLSDFGLCTGLKKAHRTEFYRNLNHSLPSDFTFQNMNSKRKAETWKRNRRQLAFSTVGTPDYIAPEVFMQTGYNKLCDWWSLGVIMYEMLIGYPPFCSETPQETYKKVMNWKETLTFPPEVPISEKAKDLILRFCCEWEHRIGAPGVEEIKSNSFFEGVDWEHIRERPAAISIEIKSIDDTSNFDEFPESDILKPTVATSNHPETDYKNKDWVFINYTYKRFEGLTARGAIPSYMKAAK</sequence>
<name>STK38_HUMAN</name>
<gene>
    <name evidence="18 24" type="primary">STK38</name>
    <name evidence="19" type="synonym">NDR1</name>
</gene>
<comment type="function">
    <text evidence="6 9 11 15 16">Serine/threonine-protein kinase that acts as a negative regulator of MAP3K1/2 signaling (PubMed:12493777, PubMed:15197186, PubMed:17906693, PubMed:7761441). Converts MAP3K2 from its phosphorylated form to its non-phosphorylated form and inhibits autophosphorylation of MAP3K2 (PubMed:12493777, PubMed:15197186, PubMed:17906693, PubMed:7761441). Acts as an ufmylation 'reader' in a kinase-independent manner: specifically recognizes and binds mono-ufmylated histone H4 in response to DNA damage, promoting the recruitment of SUV39H1 to the double-strand breaks, resulting in ATM activation (PubMed:32537488).</text>
</comment>
<comment type="catalytic activity">
    <reaction evidence="6">
        <text>L-seryl-[protein] + ATP = O-phospho-L-seryl-[protein] + ADP + H(+)</text>
        <dbReference type="Rhea" id="RHEA:17989"/>
        <dbReference type="Rhea" id="RHEA-COMP:9863"/>
        <dbReference type="Rhea" id="RHEA-COMP:11604"/>
        <dbReference type="ChEBI" id="CHEBI:15378"/>
        <dbReference type="ChEBI" id="CHEBI:29999"/>
        <dbReference type="ChEBI" id="CHEBI:30616"/>
        <dbReference type="ChEBI" id="CHEBI:83421"/>
        <dbReference type="ChEBI" id="CHEBI:456216"/>
        <dbReference type="EC" id="2.7.11.1"/>
    </reaction>
</comment>
<comment type="catalytic activity">
    <reaction evidence="6">
        <text>L-threonyl-[protein] + ATP = O-phospho-L-threonyl-[protein] + ADP + H(+)</text>
        <dbReference type="Rhea" id="RHEA:46608"/>
        <dbReference type="Rhea" id="RHEA-COMP:11060"/>
        <dbReference type="Rhea" id="RHEA-COMP:11605"/>
        <dbReference type="ChEBI" id="CHEBI:15378"/>
        <dbReference type="ChEBI" id="CHEBI:30013"/>
        <dbReference type="ChEBI" id="CHEBI:30616"/>
        <dbReference type="ChEBI" id="CHEBI:61977"/>
        <dbReference type="ChEBI" id="CHEBI:456216"/>
        <dbReference type="EC" id="2.7.11.1"/>
    </reaction>
</comment>
<comment type="cofactor">
    <cofactor evidence="6">
        <name>Mg(2+)</name>
        <dbReference type="ChEBI" id="CHEBI:18420"/>
    </cofactor>
</comment>
<comment type="activity regulation">
    <text evidence="6 7 8 9">Activated by binding of S100B which releases autoinhibitory N-lobe interactions, enabling ATP to bind and the autophosphorylation of Ser-281. Thr-444 then undergoes calcium-dependent phosphorylation by STK24/MST3. Interactions between phosphorylated Thr-444 and the N-lobe promote additional structural changes that complete the activation of the kinase. Autoinhibition is also released by the binding of MOB1/MOBKL1A and MOB2/HCCA2 to the N-terminal of STK38.</text>
</comment>
<comment type="subunit">
    <text evidence="2 7 8 9 11 12">Homodimeric S100B binds two molecules of STK38 (PubMed:14661952). Interacts with MOB1 and MOB2 (PubMed:15067004, PubMed:15197186). Interacts with MAP3K1 and MAP3K2 (via the kinase catalytic domain) (PubMed:17906693). Forms a tripartite complex with MOBKL1B and STK3/MST2 (PubMed:18362890). Interacts with MICAL1; leading to inhibit the protein kinase activity by antagonizing activation by MST1/STK4 (By similarity).</text>
</comment>
<comment type="interaction">
    <interactant intactId="EBI-458376">
        <id>Q15208</id>
    </interactant>
    <interactant intactId="EBI-743313">
        <id>P49407</id>
        <label>ARRB1</label>
    </interactant>
    <organismsDiffer>false</organismsDiffer>
    <experiments>3</experiments>
</comment>
<comment type="interaction">
    <interactant intactId="EBI-458376">
        <id>Q15208</id>
    </interactant>
    <interactant intactId="EBI-714559">
        <id>P32121</id>
        <label>ARRB2</label>
    </interactant>
    <organismsDiffer>false</organismsDiffer>
    <experiments>3</experiments>
</comment>
<comment type="interaction">
    <interactant intactId="EBI-458376">
        <id>Q15208</id>
    </interactant>
    <interactant intactId="EBI-11524452">
        <id>Q8N9N5-2</id>
        <label>BANP</label>
    </interactant>
    <organismsDiffer>false</organismsDiffer>
    <experiments>3</experiments>
</comment>
<comment type="interaction">
    <interactant intactId="EBI-458376">
        <id>Q15208</id>
    </interactant>
    <interactant intactId="EBI-603614">
        <id>Q03135</id>
        <label>CAV1</label>
    </interactant>
    <organismsDiffer>false</organismsDiffer>
    <experiments>3</experiments>
</comment>
<comment type="interaction">
    <interactant intactId="EBI-458376">
        <id>Q15208</id>
    </interactant>
    <interactant intactId="EBI-352572">
        <id>P08238</id>
        <label>HSP90AB1</label>
    </interactant>
    <organismsDiffer>false</organismsDiffer>
    <experiments>2</experiments>
</comment>
<comment type="interaction">
    <interactant intactId="EBI-458376">
        <id>Q15208</id>
    </interactant>
    <interactant intactId="EBI-748229">
        <id>Q9H8S9</id>
        <label>MOB1A</label>
    </interactant>
    <organismsDiffer>false</organismsDiffer>
    <experiments>3</experiments>
</comment>
<comment type="interaction">
    <interactant intactId="EBI-458376">
        <id>Q15208</id>
    </interactant>
    <interactant intactId="EBI-2558739">
        <id>Q70IA6</id>
        <label>MOB2</label>
    </interactant>
    <organismsDiffer>false</organismsDiffer>
    <experiments>4</experiments>
</comment>
<comment type="interaction">
    <interactant intactId="EBI-458376">
        <id>Q15208</id>
    </interactant>
    <interactant intactId="EBI-389883">
        <id>P16333</id>
        <label>NCK1</label>
    </interactant>
    <organismsDiffer>false</organismsDiffer>
    <experiments>3</experiments>
</comment>
<comment type="interaction">
    <interactant intactId="EBI-458376">
        <id>Q15208</id>
    </interactant>
    <interactant intactId="EBI-716384">
        <id>P30086</id>
        <label>PEBP1</label>
    </interactant>
    <organismsDiffer>false</organismsDiffer>
    <experiments>3</experiments>
</comment>
<comment type="interaction">
    <interactant intactId="EBI-458376">
        <id>Q15208</id>
    </interactant>
    <interactant intactId="EBI-458452">
        <id>P02638</id>
        <label>S100B</label>
    </interactant>
    <organismsDiffer>true</organismsDiffer>
    <experiments>3</experiments>
</comment>
<comment type="subcellular location">
    <subcellularLocation>
        <location evidence="6 9 12 16">Nucleus</location>
    </subcellularLocation>
    <subcellularLocation>
        <location evidence="11 16">Cytoplasm</location>
    </subcellularLocation>
    <subcellularLocation>
        <location evidence="15">Chromosome</location>
    </subcellularLocation>
    <text evidence="15">Localizes to DNA double-strand breaks in response to DNA damage.</text>
</comment>
<comment type="tissue specificity">
    <text evidence="9 16">Ubiquitously expressed with highest levels observed in peripheral blood leukocytes.</text>
</comment>
<comment type="domain">
    <text evidence="15">The UFM1-interacting motif (UFIM) specifically recognizes and binds ufmylated histone H4.</text>
</comment>
<comment type="PTM">
    <text evidence="21">ISGylated.</text>
</comment>
<comment type="PTM">
    <text evidence="6 12">Phosphorylated by STK3/MST2 and this is enhanced by MOBKL1B.</text>
</comment>
<comment type="similarity">
    <text evidence="20">Belongs to the protein kinase superfamily. AGC Ser/Thr protein kinase family.</text>
</comment>
<comment type="caution">
    <text evidence="13 14">Was originally thought to be part of the MLL5-L complex, at least composed of KMT2E, STK38, PPP1CA, PPP1CB, PPP1CC, HCFC1, ACTB and OGT (PubMed:19377461). However, the corresponding article has been retracted (PubMed:24336203).</text>
</comment>
<keyword id="KW-0002">3D-structure</keyword>
<keyword id="KW-0007">Acetylation</keyword>
<keyword id="KW-0067">ATP-binding</keyword>
<keyword id="KW-0158">Chromosome</keyword>
<keyword id="KW-0963">Cytoplasm</keyword>
<keyword id="KW-0903">Direct protein sequencing</keyword>
<keyword id="KW-0227">DNA damage</keyword>
<keyword id="KW-0418">Kinase</keyword>
<keyword id="KW-0460">Magnesium</keyword>
<keyword id="KW-0479">Metal-binding</keyword>
<keyword id="KW-0547">Nucleotide-binding</keyword>
<keyword id="KW-0539">Nucleus</keyword>
<keyword id="KW-0597">Phosphoprotein</keyword>
<keyword id="KW-1267">Proteomics identification</keyword>
<keyword id="KW-1185">Reference proteome</keyword>
<keyword id="KW-0723">Serine/threonine-protein kinase</keyword>
<keyword id="KW-0808">Transferase</keyword>
<keyword id="KW-0832">Ubl conjugation</keyword>
<organism>
    <name type="scientific">Homo sapiens</name>
    <name type="common">Human</name>
    <dbReference type="NCBI Taxonomy" id="9606"/>
    <lineage>
        <taxon>Eukaryota</taxon>
        <taxon>Metazoa</taxon>
        <taxon>Chordata</taxon>
        <taxon>Craniata</taxon>
        <taxon>Vertebrata</taxon>
        <taxon>Euteleostomi</taxon>
        <taxon>Mammalia</taxon>
        <taxon>Eutheria</taxon>
        <taxon>Euarchontoglires</taxon>
        <taxon>Primates</taxon>
        <taxon>Haplorrhini</taxon>
        <taxon>Catarrhini</taxon>
        <taxon>Hominidae</taxon>
        <taxon>Homo</taxon>
    </lineage>
</organism>
<accession>Q15208</accession>
<accession>Q503A1</accession>
<feature type="initiator methionine" description="Removed" evidence="17">
    <location>
        <position position="1"/>
    </location>
</feature>
<feature type="chain" id="PRO_0000086718" description="Serine/threonine-protein kinase 38">
    <location>
        <begin position="2"/>
        <end position="465"/>
    </location>
</feature>
<feature type="domain" description="Protein kinase" evidence="3 23">
    <location>
        <begin position="89"/>
        <end position="382"/>
    </location>
</feature>
<feature type="domain" description="AGC-kinase C-terminal" evidence="4">
    <location>
        <begin position="383"/>
        <end position="455"/>
    </location>
</feature>
<feature type="region of interest" description="Interaction with S100B" evidence="7">
    <location>
        <begin position="62"/>
        <end position="87"/>
    </location>
</feature>
<feature type="short sequence motif" description="UFM1-interacting motif (UFIM)" evidence="15">
    <location>
        <begin position="306"/>
        <end position="311"/>
    </location>
</feature>
<feature type="active site" description="Proton acceptor" evidence="3 5">
    <location>
        <position position="212"/>
    </location>
</feature>
<feature type="binding site" evidence="1 3">
    <location>
        <begin position="95"/>
        <end position="103"/>
    </location>
    <ligand>
        <name>ATP</name>
        <dbReference type="ChEBI" id="CHEBI:30616"/>
    </ligand>
</feature>
<feature type="binding site" evidence="3 6 16">
    <location>
        <position position="118"/>
    </location>
    <ligand>
        <name>ATP</name>
        <dbReference type="ChEBI" id="CHEBI:30616"/>
    </ligand>
</feature>
<feature type="modified residue" description="N-acetylalanine" evidence="17">
    <location>
        <position position="2"/>
    </location>
</feature>
<feature type="modified residue" description="Phosphothreonine" evidence="6">
    <location>
        <position position="74"/>
    </location>
</feature>
<feature type="modified residue" description="Phosphoserine" evidence="25 26">
    <location>
        <position position="264"/>
    </location>
</feature>
<feature type="modified residue" description="Phosphoserine; by autocatalysis" evidence="6">
    <location>
        <position position="281"/>
    </location>
</feature>
<feature type="modified residue" description="Phosphothreonine; by STK24/MST3" evidence="6">
    <location>
        <position position="444"/>
    </location>
</feature>
<feature type="sequence variant" id="VAR_041196" description="In a metastatic melanoma sample; somatic mutation." evidence="10">
    <original>E</original>
    <variation>K</variation>
    <location>
        <position position="18"/>
    </location>
</feature>
<feature type="sequence variant" id="VAR_041197" description="In dbSNP:rs56005153." evidence="10">
    <original>D</original>
    <variation>N</variation>
    <location>
        <position position="145"/>
    </location>
</feature>
<feature type="sequence variant" id="VAR_041198" description="In dbSNP:rs56105564." evidence="10">
    <original>K</original>
    <variation>R</variation>
    <location>
        <position position="267"/>
    </location>
</feature>
<feature type="mutagenesis site" description="Decreases autophosphorylation and kinase activity. Reduced binding of S100B." evidence="6">
    <original>T</original>
    <variation>A</variation>
    <location>
        <position position="74"/>
    </location>
</feature>
<feature type="mutagenesis site" description="Loss of autophosphorylation and kinase activity." evidence="6 16">
    <original>K</original>
    <variation>A</variation>
    <location>
        <position position="118"/>
    </location>
</feature>
<feature type="mutagenesis site" description="Loss of autophosphorylation and kinase activity." evidence="6">
    <original>S</original>
    <variation>A</variation>
    <location>
        <position position="281"/>
    </location>
</feature>
<feature type="mutagenesis site" description="Abolished binding to ufmylated histone H4." evidence="15">
    <original>WSLGVI</original>
    <variation>ASAGAA</variation>
    <location>
        <begin position="306"/>
        <end position="311"/>
    </location>
</feature>
<feature type="mutagenesis site" description="Decreases autophosphorylation and kinase activity." evidence="6">
    <original>T</original>
    <variation>A</variation>
    <location>
        <position position="444"/>
    </location>
</feature>
<feature type="helix" evidence="27">
    <location>
        <begin position="74"/>
        <end position="85"/>
    </location>
</feature>
<feature type="helix" evidence="28">
    <location>
        <begin position="86"/>
        <end position="88"/>
    </location>
</feature>
<feature type="strand" evidence="28">
    <location>
        <begin position="89"/>
        <end position="98"/>
    </location>
</feature>
<feature type="strand" evidence="28">
    <location>
        <begin position="101"/>
        <end position="108"/>
    </location>
</feature>
<feature type="turn" evidence="28">
    <location>
        <begin position="109"/>
        <end position="111"/>
    </location>
</feature>
<feature type="strand" evidence="28">
    <location>
        <begin position="114"/>
        <end position="121"/>
    </location>
</feature>
<feature type="helix" evidence="28">
    <location>
        <begin position="122"/>
        <end position="124"/>
    </location>
</feature>
<feature type="helix" evidence="28">
    <location>
        <begin position="128"/>
        <end position="144"/>
    </location>
</feature>
<feature type="strand" evidence="28">
    <location>
        <begin position="152"/>
        <end position="157"/>
    </location>
</feature>
<feature type="strand" evidence="28">
    <location>
        <begin position="159"/>
        <end position="166"/>
    </location>
</feature>
<feature type="helix" evidence="28">
    <location>
        <begin position="174"/>
        <end position="181"/>
    </location>
</feature>
<feature type="helix" evidence="28">
    <location>
        <begin position="186"/>
        <end position="205"/>
    </location>
</feature>
<feature type="helix" evidence="28">
    <location>
        <begin position="215"/>
        <end position="217"/>
    </location>
</feature>
<feature type="strand" evidence="28">
    <location>
        <begin position="218"/>
        <end position="220"/>
    </location>
</feature>
<feature type="strand" evidence="28">
    <location>
        <begin position="226"/>
        <end position="228"/>
    </location>
</feature>
<feature type="strand" evidence="28">
    <location>
        <begin position="232"/>
        <end position="234"/>
    </location>
</feature>
<feature type="helix" evidence="28">
    <location>
        <begin position="239"/>
        <end position="241"/>
    </location>
</feature>
<feature type="helix" evidence="28">
    <location>
        <begin position="243"/>
        <end position="246"/>
    </location>
</feature>
<feature type="helix" evidence="28">
    <location>
        <begin position="257"/>
        <end position="260"/>
    </location>
</feature>
<feature type="helix" evidence="28">
    <location>
        <begin position="264"/>
        <end position="273"/>
    </location>
</feature>
<feature type="helix" evidence="28">
    <location>
        <begin position="275"/>
        <end position="280"/>
    </location>
</feature>
<feature type="helix" evidence="28">
    <location>
        <begin position="291"/>
        <end position="294"/>
    </location>
</feature>
<feature type="helix" evidence="28">
    <location>
        <begin position="303"/>
        <end position="317"/>
    </location>
</feature>
<feature type="helix" evidence="28">
    <location>
        <begin position="327"/>
        <end position="335"/>
    </location>
</feature>
<feature type="helix" evidence="28">
    <location>
        <begin position="337"/>
        <end position="340"/>
    </location>
</feature>
<feature type="helix" evidence="28">
    <location>
        <begin position="351"/>
        <end position="360"/>
    </location>
</feature>
<feature type="helix" evidence="28">
    <location>
        <begin position="364"/>
        <end position="366"/>
    </location>
</feature>
<feature type="turn" evidence="28">
    <location>
        <begin position="368"/>
        <end position="371"/>
    </location>
</feature>
<feature type="helix" evidence="28">
    <location>
        <begin position="374"/>
        <end position="377"/>
    </location>
</feature>
<feature type="helix" evidence="28">
    <location>
        <begin position="380"/>
        <end position="382"/>
    </location>
</feature>
<feature type="strand" evidence="28">
    <location>
        <begin position="387"/>
        <end position="389"/>
    </location>
</feature>
<feature type="helix" evidence="28">
    <location>
        <begin position="390"/>
        <end position="392"/>
    </location>
</feature>
<reference evidence="20 23" key="1">
    <citation type="journal article" date="1995" name="Proc. Natl. Acad. Sci. U.S.A.">
        <title>Molecular cloning and characterization of a conserved nuclear serine/threonine protein kinase.</title>
        <authorList>
            <person name="Millward T.A."/>
            <person name="Cron P."/>
            <person name="Hemmings B.A."/>
        </authorList>
    </citation>
    <scope>NUCLEOTIDE SEQUENCE [MRNA]</scope>
    <scope>FUNCTION</scope>
    <scope>TISSUE SPECIFICITY</scope>
    <scope>SUBCELLULAR LOCATION</scope>
    <scope>MUTAGENESIS OF LYS-118</scope>
    <source>
        <tissue evidence="23">Fetal brain</tissue>
    </source>
</reference>
<reference key="2">
    <citation type="journal article" date="2003" name="Nature">
        <title>The DNA sequence and analysis of human chromosome 6.</title>
        <authorList>
            <person name="Mungall A.J."/>
            <person name="Palmer S.A."/>
            <person name="Sims S.K."/>
            <person name="Edwards C.A."/>
            <person name="Ashurst J.L."/>
            <person name="Wilming L."/>
            <person name="Jones M.C."/>
            <person name="Horton R."/>
            <person name="Hunt S.E."/>
            <person name="Scott C.E."/>
            <person name="Gilbert J.G.R."/>
            <person name="Clamp M.E."/>
            <person name="Bethel G."/>
            <person name="Milne S."/>
            <person name="Ainscough R."/>
            <person name="Almeida J.P."/>
            <person name="Ambrose K.D."/>
            <person name="Andrews T.D."/>
            <person name="Ashwell R.I.S."/>
            <person name="Babbage A.K."/>
            <person name="Bagguley C.L."/>
            <person name="Bailey J."/>
            <person name="Banerjee R."/>
            <person name="Barker D.J."/>
            <person name="Barlow K.F."/>
            <person name="Bates K."/>
            <person name="Beare D.M."/>
            <person name="Beasley H."/>
            <person name="Beasley O."/>
            <person name="Bird C.P."/>
            <person name="Blakey S.E."/>
            <person name="Bray-Allen S."/>
            <person name="Brook J."/>
            <person name="Brown A.J."/>
            <person name="Brown J.Y."/>
            <person name="Burford D.C."/>
            <person name="Burrill W."/>
            <person name="Burton J."/>
            <person name="Carder C."/>
            <person name="Carter N.P."/>
            <person name="Chapman J.C."/>
            <person name="Clark S.Y."/>
            <person name="Clark G."/>
            <person name="Clee C.M."/>
            <person name="Clegg S."/>
            <person name="Cobley V."/>
            <person name="Collier R.E."/>
            <person name="Collins J.E."/>
            <person name="Colman L.K."/>
            <person name="Corby N.R."/>
            <person name="Coville G.J."/>
            <person name="Culley K.M."/>
            <person name="Dhami P."/>
            <person name="Davies J."/>
            <person name="Dunn M."/>
            <person name="Earthrowl M.E."/>
            <person name="Ellington A.E."/>
            <person name="Evans K.A."/>
            <person name="Faulkner L."/>
            <person name="Francis M.D."/>
            <person name="Frankish A."/>
            <person name="Frankland J."/>
            <person name="French L."/>
            <person name="Garner P."/>
            <person name="Garnett J."/>
            <person name="Ghori M.J."/>
            <person name="Gilby L.M."/>
            <person name="Gillson C.J."/>
            <person name="Glithero R.J."/>
            <person name="Grafham D.V."/>
            <person name="Grant M."/>
            <person name="Gribble S."/>
            <person name="Griffiths C."/>
            <person name="Griffiths M.N.D."/>
            <person name="Hall R."/>
            <person name="Halls K.S."/>
            <person name="Hammond S."/>
            <person name="Harley J.L."/>
            <person name="Hart E.A."/>
            <person name="Heath P.D."/>
            <person name="Heathcott R."/>
            <person name="Holmes S.J."/>
            <person name="Howden P.J."/>
            <person name="Howe K.L."/>
            <person name="Howell G.R."/>
            <person name="Huckle E."/>
            <person name="Humphray S.J."/>
            <person name="Humphries M.D."/>
            <person name="Hunt A.R."/>
            <person name="Johnson C.M."/>
            <person name="Joy A.A."/>
            <person name="Kay M."/>
            <person name="Keenan S.J."/>
            <person name="Kimberley A.M."/>
            <person name="King A."/>
            <person name="Laird G.K."/>
            <person name="Langford C."/>
            <person name="Lawlor S."/>
            <person name="Leongamornlert D.A."/>
            <person name="Leversha M."/>
            <person name="Lloyd C.R."/>
            <person name="Lloyd D.M."/>
            <person name="Loveland J.E."/>
            <person name="Lovell J."/>
            <person name="Martin S."/>
            <person name="Mashreghi-Mohammadi M."/>
            <person name="Maslen G.L."/>
            <person name="Matthews L."/>
            <person name="McCann O.T."/>
            <person name="McLaren S.J."/>
            <person name="McLay K."/>
            <person name="McMurray A."/>
            <person name="Moore M.J.F."/>
            <person name="Mullikin J.C."/>
            <person name="Niblett D."/>
            <person name="Nickerson T."/>
            <person name="Novik K.L."/>
            <person name="Oliver K."/>
            <person name="Overton-Larty E.K."/>
            <person name="Parker A."/>
            <person name="Patel R."/>
            <person name="Pearce A.V."/>
            <person name="Peck A.I."/>
            <person name="Phillimore B.J.C.T."/>
            <person name="Phillips S."/>
            <person name="Plumb R.W."/>
            <person name="Porter K.M."/>
            <person name="Ramsey Y."/>
            <person name="Ranby S.A."/>
            <person name="Rice C.M."/>
            <person name="Ross M.T."/>
            <person name="Searle S.M."/>
            <person name="Sehra H.K."/>
            <person name="Sheridan E."/>
            <person name="Skuce C.D."/>
            <person name="Smith S."/>
            <person name="Smith M."/>
            <person name="Spraggon L."/>
            <person name="Squares S.L."/>
            <person name="Steward C.A."/>
            <person name="Sycamore N."/>
            <person name="Tamlyn-Hall G."/>
            <person name="Tester J."/>
            <person name="Theaker A.J."/>
            <person name="Thomas D.W."/>
            <person name="Thorpe A."/>
            <person name="Tracey A."/>
            <person name="Tromans A."/>
            <person name="Tubby B."/>
            <person name="Wall M."/>
            <person name="Wallis J.M."/>
            <person name="West A.P."/>
            <person name="White S.S."/>
            <person name="Whitehead S.L."/>
            <person name="Whittaker H."/>
            <person name="Wild A."/>
            <person name="Willey D.J."/>
            <person name="Wilmer T.E."/>
            <person name="Wood J.M."/>
            <person name="Wray P.W."/>
            <person name="Wyatt J.C."/>
            <person name="Young L."/>
            <person name="Younger R.M."/>
            <person name="Bentley D.R."/>
            <person name="Coulson A."/>
            <person name="Durbin R.M."/>
            <person name="Hubbard T."/>
            <person name="Sulston J.E."/>
            <person name="Dunham I."/>
            <person name="Rogers J."/>
            <person name="Beck S."/>
        </authorList>
    </citation>
    <scope>NUCLEOTIDE SEQUENCE [LARGE SCALE GENOMIC DNA]</scope>
</reference>
<reference evidence="22" key="3">
    <citation type="journal article" date="2004" name="Genome Res.">
        <title>The status, quality, and expansion of the NIH full-length cDNA project: the Mammalian Gene Collection (MGC).</title>
        <authorList>
            <consortium name="The MGC Project Team"/>
        </authorList>
    </citation>
    <scope>NUCLEOTIDE SEQUENCE [LARGE SCALE MRNA]</scope>
    <source>
        <tissue>Placenta</tissue>
        <tissue evidence="22">Uterus</tissue>
    </source>
</reference>
<reference key="4">
    <citation type="submission" date="2008-03" db="UniProtKB">
        <authorList>
            <person name="Bienvenut W.V."/>
            <person name="Calvo F."/>
            <person name="Kolch W."/>
        </authorList>
    </citation>
    <scope>PROTEIN SEQUENCE OF 2-17; 25-44; 51-63; 72-78; 82-97; 110-118; 122-159; 182-239; 248-266; 277-301; 334-391; 394-402 AND 437-454</scope>
    <scope>CLEAVAGE OF INITIATOR METHIONINE</scope>
    <scope>ACETYLATION AT ALA-2</scope>
    <scope>IDENTIFICATION BY MASS SPECTROMETRY</scope>
    <source>
        <tissue>Cervix carcinoma</tissue>
    </source>
</reference>
<reference evidence="20" key="5">
    <citation type="journal article" date="2003" name="J. Biol. Chem.">
        <title>Mechanism of Ca2+-mediated regulation of NDR protein kinase through autophosphorylation and phosphorylation by an upstream kinase.</title>
        <authorList>
            <person name="Tamaskovic R."/>
            <person name="Bichsel S.J."/>
            <person name="Rogniaux H."/>
            <person name="Stegert M.R."/>
            <person name="Hemmings B.A."/>
        </authorList>
    </citation>
    <scope>FUNCTION</scope>
    <scope>CATALYTIC ACTIVITY</scope>
    <scope>ACTIVITY REGULATION</scope>
    <scope>SUBCELLULAR LOCATION</scope>
    <scope>COFACTOR</scope>
    <scope>PHOSPHORYLATION AT THR-74; SER-281 AND THR-444</scope>
    <scope>MUTAGENESIS OF THR-74; LYS-118; SER-281 AND THR-444</scope>
</reference>
<reference evidence="20" key="6">
    <citation type="journal article" date="2004" name="J. Biol. Chem.">
        <title>Human Mob proteins regulate the NDR1 and NDR2 serine-threonine kinases.</title>
        <authorList>
            <person name="Devroe E."/>
            <person name="Erdjument-Bromage H."/>
            <person name="Tempst P."/>
            <person name="Silver P.A."/>
        </authorList>
    </citation>
    <scope>ACTIVITY REGULATION</scope>
    <scope>INTERACTION WITH MOB1 AND MOB2</scope>
</reference>
<reference evidence="20" key="7">
    <citation type="journal article" date="2004" name="J. Biol. Chem.">
        <title>Mechanism of activation of NDR (nuclear Dbf2-related) protein kinase by the hMOB1 protein.</title>
        <authorList>
            <person name="Bichsel S.J."/>
            <person name="Tamaskovic R."/>
            <person name="Stegert M.R."/>
            <person name="Hemmings B.A."/>
        </authorList>
    </citation>
    <scope>FUNCTION</scope>
    <scope>SUBCELLULAR LOCATION</scope>
    <scope>TISSUE SPECIFICITY</scope>
    <scope>ACTIVITY REGULATION</scope>
    <scope>INTERACTION WITH MOB1 AND MOB2</scope>
</reference>
<reference key="8">
    <citation type="journal article" date="2006" name="Biochem. Biophys. Res. Commun.">
        <title>Identification and Herc5-mediated ISGylation of novel target proteins.</title>
        <authorList>
            <person name="Takeuchi T."/>
            <person name="Inoue S."/>
            <person name="Yokosawa H."/>
        </authorList>
    </citation>
    <scope>ISGYLATION</scope>
</reference>
<reference key="9">
    <citation type="journal article" date="2008" name="Oncogene">
        <title>Threonine 74 of MOB1 is a putative key phosphorylation site by MST2 to form the scaffold to activate nuclear Dbf2-related kinase 1.</title>
        <authorList>
            <person name="Hirabayashi S."/>
            <person name="Nakagawa K."/>
            <person name="Sumita K."/>
            <person name="Hidaka S."/>
            <person name="Kawai T."/>
            <person name="Ikeda M."/>
            <person name="Kawata A."/>
            <person name="Ohno K."/>
            <person name="Hata Y."/>
        </authorList>
    </citation>
    <scope>INTERACTION WITH STK3/MST2 AND MOBKL1B</scope>
    <scope>SUBCELLULAR LOCATION</scope>
    <scope>PHOSPHORYLATION BY STK3/MST2</scope>
</reference>
<reference key="10">
    <citation type="journal article" date="2008" name="Oncogene">
        <title>Negative regulation of MEKK1/2 signaling by serine-threonine kinase 38 (STK38).</title>
        <authorList>
            <person name="Enomoto A."/>
            <person name="Kido N."/>
            <person name="Ito M."/>
            <person name="Morita A."/>
            <person name="Matsumoto Y."/>
            <person name="Takamatsu N."/>
            <person name="Hosoi Y."/>
            <person name="Miyagawa K."/>
        </authorList>
    </citation>
    <scope>FUNCTION</scope>
    <scope>SUBCELLULAR LOCATION</scope>
    <scope>INTERACTION WITH MAP3K1 AND MAP3K2</scope>
</reference>
<reference key="11">
    <citation type="journal article" date="2008" name="Proc. Natl. Acad. Sci. U.S.A.">
        <title>A quantitative atlas of mitotic phosphorylation.</title>
        <authorList>
            <person name="Dephoure N."/>
            <person name="Zhou C."/>
            <person name="Villen J."/>
            <person name="Beausoleil S.A."/>
            <person name="Bakalarski C.E."/>
            <person name="Elledge S.J."/>
            <person name="Gygi S.P."/>
        </authorList>
    </citation>
    <scope>IDENTIFICATION BY MASS SPECTROMETRY [LARGE SCALE ANALYSIS]</scope>
    <source>
        <tissue>Cervix carcinoma</tissue>
    </source>
</reference>
<reference key="12">
    <citation type="journal article" date="2009" name="Nature">
        <title>GlcNAcylation of a histone methyltransferase in retinoic-acid-induced granulopoiesis.</title>
        <authorList>
            <person name="Fujiki R."/>
            <person name="Chikanishi T."/>
            <person name="Hashiba W."/>
            <person name="Ito H."/>
            <person name="Takada I."/>
            <person name="Roeder R.G."/>
            <person name="Kitagawa H."/>
            <person name="Kato S."/>
        </authorList>
    </citation>
    <scope>RETRACTED PAPER</scope>
</reference>
<reference key="13">
    <citation type="journal article" date="2014" name="Nature">
        <title>Retraction: GlcNAcylation of a histone methyltransferase in retinoic-acid-induced granulopoiesis.</title>
        <authorList>
            <person name="Fujiki R."/>
            <person name="Chikanishi T."/>
            <person name="Hashiba W."/>
            <person name="Ito H."/>
            <person name="Takada I."/>
            <person name="Roeder R.G."/>
            <person name="Kitagawa H."/>
            <person name="Kato S."/>
        </authorList>
    </citation>
    <scope>CAUTION</scope>
    <scope>RETRACTION NOTICE OF PUBMED:19377461</scope>
</reference>
<reference key="14">
    <citation type="journal article" date="2009" name="Sci. Signal.">
        <title>Quantitative phosphoproteomic analysis of T cell receptor signaling reveals system-wide modulation of protein-protein interactions.</title>
        <authorList>
            <person name="Mayya V."/>
            <person name="Lundgren D.H."/>
            <person name="Hwang S.-I."/>
            <person name="Rezaul K."/>
            <person name="Wu L."/>
            <person name="Eng J.K."/>
            <person name="Rodionov V."/>
            <person name="Han D.K."/>
        </authorList>
    </citation>
    <scope>IDENTIFICATION BY MASS SPECTROMETRY [LARGE SCALE ANALYSIS]</scope>
    <source>
        <tissue>Leukemic T-cell</tissue>
    </source>
</reference>
<reference key="15">
    <citation type="journal article" date="2010" name="Sci. Signal.">
        <title>Quantitative phosphoproteomics reveals widespread full phosphorylation site occupancy during mitosis.</title>
        <authorList>
            <person name="Olsen J.V."/>
            <person name="Vermeulen M."/>
            <person name="Santamaria A."/>
            <person name="Kumar C."/>
            <person name="Miller M.L."/>
            <person name="Jensen L.J."/>
            <person name="Gnad F."/>
            <person name="Cox J."/>
            <person name="Jensen T.S."/>
            <person name="Nigg E.A."/>
            <person name="Brunak S."/>
            <person name="Mann M."/>
        </authorList>
    </citation>
    <scope>PHOSPHORYLATION [LARGE SCALE ANALYSIS] AT SER-264</scope>
    <scope>IDENTIFICATION BY MASS SPECTROMETRY [LARGE SCALE ANALYSIS]</scope>
    <source>
        <tissue>Cervix carcinoma</tissue>
    </source>
</reference>
<reference key="16">
    <citation type="journal article" date="2011" name="BMC Syst. Biol.">
        <title>Initial characterization of the human central proteome.</title>
        <authorList>
            <person name="Burkard T.R."/>
            <person name="Planyavsky M."/>
            <person name="Kaupe I."/>
            <person name="Breitwieser F.P."/>
            <person name="Buerckstuemmer T."/>
            <person name="Bennett K.L."/>
            <person name="Superti-Furga G."/>
            <person name="Colinge J."/>
        </authorList>
    </citation>
    <scope>IDENTIFICATION BY MASS SPECTROMETRY [LARGE SCALE ANALYSIS]</scope>
</reference>
<reference key="17">
    <citation type="journal article" date="2013" name="J. Proteome Res.">
        <title>Toward a comprehensive characterization of a human cancer cell phosphoproteome.</title>
        <authorList>
            <person name="Zhou H."/>
            <person name="Di Palma S."/>
            <person name="Preisinger C."/>
            <person name="Peng M."/>
            <person name="Polat A.N."/>
            <person name="Heck A.J."/>
            <person name="Mohammed S."/>
        </authorList>
    </citation>
    <scope>PHOSPHORYLATION [LARGE SCALE ANALYSIS] AT SER-264</scope>
    <scope>IDENTIFICATION BY MASS SPECTROMETRY [LARGE SCALE ANALYSIS]</scope>
    <source>
        <tissue>Cervix carcinoma</tissue>
        <tissue>Erythroleukemia</tissue>
    </source>
</reference>
<reference key="18">
    <citation type="journal article" date="2020" name="Sci. Adv.">
        <title>STK38 promotes ATM activation by acting as a reader of histone H4 ufmylation.</title>
        <authorList>
            <person name="Qin B."/>
            <person name="Yu J."/>
            <person name="Nowsheen S."/>
            <person name="Zhao F."/>
            <person name="Wang L."/>
            <person name="Lou Z."/>
        </authorList>
    </citation>
    <scope>FUNCTION</scope>
    <scope>SUBCELLULAR LOCATION</scope>
    <scope>DOMAIN</scope>
    <scope>MUTAGENESIS OF 306-TRP--ILE-311</scope>
</reference>
<reference evidence="20" key="19">
    <citation type="journal article" date="2003" name="Biochemistry">
        <title>Structure of the Ca2+/S100B/NDR kinase peptide complex: insights into S100 target specificity and activation of the kinase.</title>
        <authorList>
            <person name="Bhattacharya S."/>
            <person name="Large E."/>
            <person name="Heizmann C.W."/>
            <person name="Hemmings B.A."/>
            <person name="Chazin W.J."/>
        </authorList>
    </citation>
    <scope>STRUCTURE BY NMR OF 62-84</scope>
    <scope>ACTIVITY REGULATION</scope>
    <scope>INTERACTION WITH S100B</scope>
</reference>
<reference key="20">
    <citation type="journal article" date="2007" name="Nature">
        <title>Patterns of somatic mutation in human cancer genomes.</title>
        <authorList>
            <person name="Greenman C."/>
            <person name="Stephens P."/>
            <person name="Smith R."/>
            <person name="Dalgliesh G.L."/>
            <person name="Hunter C."/>
            <person name="Bignell G."/>
            <person name="Davies H."/>
            <person name="Teague J."/>
            <person name="Butler A."/>
            <person name="Stevens C."/>
            <person name="Edkins S."/>
            <person name="O'Meara S."/>
            <person name="Vastrik I."/>
            <person name="Schmidt E.E."/>
            <person name="Avis T."/>
            <person name="Barthorpe S."/>
            <person name="Bhamra G."/>
            <person name="Buck G."/>
            <person name="Choudhury B."/>
            <person name="Clements J."/>
            <person name="Cole J."/>
            <person name="Dicks E."/>
            <person name="Forbes S."/>
            <person name="Gray K."/>
            <person name="Halliday K."/>
            <person name="Harrison R."/>
            <person name="Hills K."/>
            <person name="Hinton J."/>
            <person name="Jenkinson A."/>
            <person name="Jones D."/>
            <person name="Menzies A."/>
            <person name="Mironenko T."/>
            <person name="Perry J."/>
            <person name="Raine K."/>
            <person name="Richardson D."/>
            <person name="Shepherd R."/>
            <person name="Small A."/>
            <person name="Tofts C."/>
            <person name="Varian J."/>
            <person name="Webb T."/>
            <person name="West S."/>
            <person name="Widaa S."/>
            <person name="Yates A."/>
            <person name="Cahill D.P."/>
            <person name="Louis D.N."/>
            <person name="Goldstraw P."/>
            <person name="Nicholson A.G."/>
            <person name="Brasseur F."/>
            <person name="Looijenga L."/>
            <person name="Weber B.L."/>
            <person name="Chiew Y.-E."/>
            <person name="DeFazio A."/>
            <person name="Greaves M.F."/>
            <person name="Green A.R."/>
            <person name="Campbell P."/>
            <person name="Birney E."/>
            <person name="Easton D.F."/>
            <person name="Chenevix-Trench G."/>
            <person name="Tan M.-H."/>
            <person name="Khoo S.K."/>
            <person name="Teh B.T."/>
            <person name="Yuen S.T."/>
            <person name="Leung S.Y."/>
            <person name="Wooster R."/>
            <person name="Futreal P.A."/>
            <person name="Stratton M.R."/>
        </authorList>
    </citation>
    <scope>VARIANTS [LARGE SCALE ANALYSIS] LYS-18; ASN-145 AND ARG-267</scope>
</reference>
<proteinExistence type="evidence at protein level"/>
<protein>
    <recommendedName>
        <fullName evidence="20">Serine/threonine-protein kinase 38</fullName>
        <ecNumber evidence="6">2.7.11.1</ecNumber>
    </recommendedName>
    <alternativeName>
        <fullName evidence="19">NDR1 protein kinase</fullName>
    </alternativeName>
    <alternativeName>
        <fullName evidence="19">Nuclear Dbf2-related kinase 1</fullName>
    </alternativeName>
</protein>